<protein>
    <recommendedName>
        <fullName evidence="1">Large ribosomal subunit protein uL2</fullName>
    </recommendedName>
    <alternativeName>
        <fullName evidence="3">50S ribosomal protein L2</fullName>
    </alternativeName>
</protein>
<sequence length="280" mass="30394">MAIRKYKPTSPGRRGASVSDFSEVTRSTPEKSLVRPLHGHGGRNAHGRITTRHKGGGHKRAYRVIDFRRNDKDGVNAKVAHIEYDPNRTANIALLHFLDGEKRYIIAPQGLSQGDVVESGPNADIKPGNNLPLRNIPAGTVIHAVELRPGGGAKLALSAGSSIQLLGKEGSYASLRMPSGEIRRVDVRCRATVGEVGNAEQANINWGKAGRMRWKGKRPSVRGVVMNPVDHPHGGGEGKTSGGRHPVSPWGKPEGRTRHPNKASNKLIVRRRRTGKKHGR</sequence>
<comment type="function">
    <text evidence="1">One of the primary rRNA binding proteins. Required for association of the 30S and 50S subunits to form the 70S ribosome, for tRNA binding and peptide bond formation. It has been suggested to have peptidyltransferase activity; this is somewhat controversial. Makes several contacts with the 16S rRNA in the 70S ribosome.</text>
</comment>
<comment type="subunit">
    <text evidence="1">Part of the 50S ribosomal subunit. Forms a bridge to the 30S subunit in the 70S ribosome.</text>
</comment>
<comment type="similarity">
    <text evidence="1">Belongs to the universal ribosomal protein uL2 family.</text>
</comment>
<reference key="1">
    <citation type="journal article" date="2005" name="Proc. Natl. Acad. Sci. U.S.A.">
        <title>The complete genome sequence of Mycobacterium avium subspecies paratuberculosis.</title>
        <authorList>
            <person name="Li L."/>
            <person name="Bannantine J.P."/>
            <person name="Zhang Q."/>
            <person name="Amonsin A."/>
            <person name="May B.J."/>
            <person name="Alt D."/>
            <person name="Banerji N."/>
            <person name="Kanjilal S."/>
            <person name="Kapur V."/>
        </authorList>
    </citation>
    <scope>NUCLEOTIDE SEQUENCE [LARGE SCALE GENOMIC DNA]</scope>
    <source>
        <strain>ATCC BAA-968 / K-10</strain>
    </source>
</reference>
<feature type="chain" id="PRO_0000237207" description="Large ribosomal subunit protein uL2">
    <location>
        <begin position="1"/>
        <end position="280"/>
    </location>
</feature>
<feature type="region of interest" description="Disordered" evidence="2">
    <location>
        <begin position="1"/>
        <end position="58"/>
    </location>
</feature>
<feature type="region of interest" description="Disordered" evidence="2">
    <location>
        <begin position="226"/>
        <end position="280"/>
    </location>
</feature>
<feature type="compositionally biased region" description="Basic residues" evidence="2">
    <location>
        <begin position="37"/>
        <end position="58"/>
    </location>
</feature>
<feature type="compositionally biased region" description="Basic residues" evidence="2">
    <location>
        <begin position="268"/>
        <end position="280"/>
    </location>
</feature>
<accession>Q73SB1</accession>
<dbReference type="EMBL" id="AE016958">
    <property type="protein sequence ID" value="AAS06714.1"/>
    <property type="molecule type" value="Genomic_DNA"/>
</dbReference>
<dbReference type="RefSeq" id="WP_003879441.1">
    <property type="nucleotide sequence ID" value="NZ_CP106873.1"/>
</dbReference>
<dbReference type="SMR" id="Q73SB1"/>
<dbReference type="STRING" id="262316.MAP_4164"/>
<dbReference type="KEGG" id="mpa:MAP_4164"/>
<dbReference type="PATRIC" id="fig|262316.17.peg.4436"/>
<dbReference type="eggNOG" id="COG0090">
    <property type="taxonomic scope" value="Bacteria"/>
</dbReference>
<dbReference type="HOGENOM" id="CLU_036235_2_1_11"/>
<dbReference type="Proteomes" id="UP000000580">
    <property type="component" value="Chromosome"/>
</dbReference>
<dbReference type="GO" id="GO:0015934">
    <property type="term" value="C:large ribosomal subunit"/>
    <property type="evidence" value="ECO:0007669"/>
    <property type="project" value="InterPro"/>
</dbReference>
<dbReference type="GO" id="GO:0019843">
    <property type="term" value="F:rRNA binding"/>
    <property type="evidence" value="ECO:0007669"/>
    <property type="project" value="UniProtKB-UniRule"/>
</dbReference>
<dbReference type="GO" id="GO:0003735">
    <property type="term" value="F:structural constituent of ribosome"/>
    <property type="evidence" value="ECO:0007669"/>
    <property type="project" value="InterPro"/>
</dbReference>
<dbReference type="GO" id="GO:0016740">
    <property type="term" value="F:transferase activity"/>
    <property type="evidence" value="ECO:0007669"/>
    <property type="project" value="InterPro"/>
</dbReference>
<dbReference type="GO" id="GO:0002181">
    <property type="term" value="P:cytoplasmic translation"/>
    <property type="evidence" value="ECO:0007669"/>
    <property type="project" value="TreeGrafter"/>
</dbReference>
<dbReference type="FunFam" id="2.30.30.30:FF:000001">
    <property type="entry name" value="50S ribosomal protein L2"/>
    <property type="match status" value="1"/>
</dbReference>
<dbReference type="FunFam" id="2.40.50.140:FF:000003">
    <property type="entry name" value="50S ribosomal protein L2"/>
    <property type="match status" value="1"/>
</dbReference>
<dbReference type="FunFam" id="4.10.950.10:FF:000001">
    <property type="entry name" value="50S ribosomal protein L2"/>
    <property type="match status" value="1"/>
</dbReference>
<dbReference type="Gene3D" id="2.30.30.30">
    <property type="match status" value="1"/>
</dbReference>
<dbReference type="Gene3D" id="2.40.50.140">
    <property type="entry name" value="Nucleic acid-binding proteins"/>
    <property type="match status" value="1"/>
</dbReference>
<dbReference type="Gene3D" id="4.10.950.10">
    <property type="entry name" value="Ribosomal protein L2, domain 3"/>
    <property type="match status" value="1"/>
</dbReference>
<dbReference type="HAMAP" id="MF_01320_B">
    <property type="entry name" value="Ribosomal_uL2_B"/>
    <property type="match status" value="1"/>
</dbReference>
<dbReference type="InterPro" id="IPR012340">
    <property type="entry name" value="NA-bd_OB-fold"/>
</dbReference>
<dbReference type="InterPro" id="IPR014722">
    <property type="entry name" value="Rib_uL2_dom2"/>
</dbReference>
<dbReference type="InterPro" id="IPR002171">
    <property type="entry name" value="Ribosomal_uL2"/>
</dbReference>
<dbReference type="InterPro" id="IPR005880">
    <property type="entry name" value="Ribosomal_uL2_bac/org-type"/>
</dbReference>
<dbReference type="InterPro" id="IPR022669">
    <property type="entry name" value="Ribosomal_uL2_C"/>
</dbReference>
<dbReference type="InterPro" id="IPR022671">
    <property type="entry name" value="Ribosomal_uL2_CS"/>
</dbReference>
<dbReference type="InterPro" id="IPR014726">
    <property type="entry name" value="Ribosomal_uL2_dom3"/>
</dbReference>
<dbReference type="InterPro" id="IPR022666">
    <property type="entry name" value="Ribosomal_uL2_RNA-bd_dom"/>
</dbReference>
<dbReference type="InterPro" id="IPR008991">
    <property type="entry name" value="Translation_prot_SH3-like_sf"/>
</dbReference>
<dbReference type="NCBIfam" id="TIGR01171">
    <property type="entry name" value="rplB_bact"/>
    <property type="match status" value="1"/>
</dbReference>
<dbReference type="PANTHER" id="PTHR13691:SF5">
    <property type="entry name" value="LARGE RIBOSOMAL SUBUNIT PROTEIN UL2M"/>
    <property type="match status" value="1"/>
</dbReference>
<dbReference type="PANTHER" id="PTHR13691">
    <property type="entry name" value="RIBOSOMAL PROTEIN L2"/>
    <property type="match status" value="1"/>
</dbReference>
<dbReference type="Pfam" id="PF00181">
    <property type="entry name" value="Ribosomal_L2"/>
    <property type="match status" value="1"/>
</dbReference>
<dbReference type="Pfam" id="PF03947">
    <property type="entry name" value="Ribosomal_L2_C"/>
    <property type="match status" value="1"/>
</dbReference>
<dbReference type="PIRSF" id="PIRSF002158">
    <property type="entry name" value="Ribosomal_L2"/>
    <property type="match status" value="1"/>
</dbReference>
<dbReference type="SMART" id="SM01383">
    <property type="entry name" value="Ribosomal_L2"/>
    <property type="match status" value="1"/>
</dbReference>
<dbReference type="SMART" id="SM01382">
    <property type="entry name" value="Ribosomal_L2_C"/>
    <property type="match status" value="1"/>
</dbReference>
<dbReference type="SUPFAM" id="SSF50249">
    <property type="entry name" value="Nucleic acid-binding proteins"/>
    <property type="match status" value="1"/>
</dbReference>
<dbReference type="SUPFAM" id="SSF50104">
    <property type="entry name" value="Translation proteins SH3-like domain"/>
    <property type="match status" value="1"/>
</dbReference>
<dbReference type="PROSITE" id="PS00467">
    <property type="entry name" value="RIBOSOMAL_L2"/>
    <property type="match status" value="1"/>
</dbReference>
<gene>
    <name evidence="1" type="primary">rplB</name>
    <name type="ordered locus">MAP_4164</name>
</gene>
<organism>
    <name type="scientific">Mycolicibacterium paratuberculosis (strain ATCC BAA-968 / K-10)</name>
    <name type="common">Mycobacterium paratuberculosis</name>
    <dbReference type="NCBI Taxonomy" id="262316"/>
    <lineage>
        <taxon>Bacteria</taxon>
        <taxon>Bacillati</taxon>
        <taxon>Actinomycetota</taxon>
        <taxon>Actinomycetes</taxon>
        <taxon>Mycobacteriales</taxon>
        <taxon>Mycobacteriaceae</taxon>
        <taxon>Mycobacterium</taxon>
        <taxon>Mycobacterium avium complex (MAC)</taxon>
    </lineage>
</organism>
<keyword id="KW-1185">Reference proteome</keyword>
<keyword id="KW-0687">Ribonucleoprotein</keyword>
<keyword id="KW-0689">Ribosomal protein</keyword>
<keyword id="KW-0694">RNA-binding</keyword>
<keyword id="KW-0699">rRNA-binding</keyword>
<name>RL2_MYCPA</name>
<evidence type="ECO:0000255" key="1">
    <source>
        <dbReference type="HAMAP-Rule" id="MF_01320"/>
    </source>
</evidence>
<evidence type="ECO:0000256" key="2">
    <source>
        <dbReference type="SAM" id="MobiDB-lite"/>
    </source>
</evidence>
<evidence type="ECO:0000305" key="3"/>
<proteinExistence type="inferred from homology"/>